<sequence>MARVFPLERTRNIGIMAHIDAGKTTTTERILFYTGRVHRIGEVDDGAATMDWMVQEQERGITITSAATTCYWRDYRINIIDTPGHVDFTVEVERSLRVLDGAIAVFDAVAGVEPQSETVWRQADKYRVPRIVYLNKMDRVGADFFKSMQSIKTKLGSDPVAVQIPLGAEDRFVGMIDLVTRKAFIYTDDLGTKIKEIPIPADLTGVVAEYREKLLEMVAETDEELMIKYLNGEELTVEDIKIGIRKATLAVKKFPVLCGSSYRNKGVQPLLDAVVDYLPAPTDVPAVCGIDQRTGREDRRVARDDEPFSALAFKVMVDPYVGKLTFFRVYSGTVNSGSHVYNSTKQKKERIGRLLQMHANHREEIEAAHAGDIIGAVGLKFTSTGDTLSDEEHPIILEAMEFPEPVISIAIEPKTKGDQDKMGVALQRLAEEDPTFKIQSNEETGQTLISGMGELHLEIIVDRLLREFKVQANIGRPQVAYKETIKGIAQAEGRFIRQTGGRGQYGHVVIVVEPLDRGKGFAFSNQIVGGVVPKEFIPAVETGVREALTSGVLFGYPVADVKVSLVDGSYHPVDSSEVAFKIAASMAVKKAVANASPVLLEPIMRVEVVLPEDYVGDVISDLNSRRGHITQMEHQGKTQIVRADVPLAEMFGYATELRSRTQGRGNHTMQFDHYAEVPQNIADKMIRKY</sequence>
<keyword id="KW-0963">Cytoplasm</keyword>
<keyword id="KW-0251">Elongation factor</keyword>
<keyword id="KW-0342">GTP-binding</keyword>
<keyword id="KW-0547">Nucleotide-binding</keyword>
<keyword id="KW-0648">Protein biosynthesis</keyword>
<keyword id="KW-1185">Reference proteome</keyword>
<dbReference type="EMBL" id="CP000860">
    <property type="protein sequence ID" value="ACA58783.1"/>
    <property type="molecule type" value="Genomic_DNA"/>
</dbReference>
<dbReference type="RefSeq" id="WP_012301375.1">
    <property type="nucleotide sequence ID" value="NC_010424.1"/>
</dbReference>
<dbReference type="SMR" id="B1I1I5"/>
<dbReference type="STRING" id="477974.Daud_0222"/>
<dbReference type="KEGG" id="dau:Daud_0222"/>
<dbReference type="eggNOG" id="COG0480">
    <property type="taxonomic scope" value="Bacteria"/>
</dbReference>
<dbReference type="HOGENOM" id="CLU_002794_4_1_9"/>
<dbReference type="OrthoDB" id="9804431at2"/>
<dbReference type="Proteomes" id="UP000008544">
    <property type="component" value="Chromosome"/>
</dbReference>
<dbReference type="GO" id="GO:0005737">
    <property type="term" value="C:cytoplasm"/>
    <property type="evidence" value="ECO:0007669"/>
    <property type="project" value="UniProtKB-SubCell"/>
</dbReference>
<dbReference type="GO" id="GO:0005525">
    <property type="term" value="F:GTP binding"/>
    <property type="evidence" value="ECO:0007669"/>
    <property type="project" value="UniProtKB-UniRule"/>
</dbReference>
<dbReference type="GO" id="GO:0003924">
    <property type="term" value="F:GTPase activity"/>
    <property type="evidence" value="ECO:0007669"/>
    <property type="project" value="InterPro"/>
</dbReference>
<dbReference type="GO" id="GO:0003746">
    <property type="term" value="F:translation elongation factor activity"/>
    <property type="evidence" value="ECO:0007669"/>
    <property type="project" value="UniProtKB-UniRule"/>
</dbReference>
<dbReference type="GO" id="GO:0032790">
    <property type="term" value="P:ribosome disassembly"/>
    <property type="evidence" value="ECO:0007669"/>
    <property type="project" value="TreeGrafter"/>
</dbReference>
<dbReference type="CDD" id="cd01886">
    <property type="entry name" value="EF-G"/>
    <property type="match status" value="1"/>
</dbReference>
<dbReference type="CDD" id="cd16262">
    <property type="entry name" value="EFG_III"/>
    <property type="match status" value="1"/>
</dbReference>
<dbReference type="CDD" id="cd01434">
    <property type="entry name" value="EFG_mtEFG1_IV"/>
    <property type="match status" value="1"/>
</dbReference>
<dbReference type="CDD" id="cd03713">
    <property type="entry name" value="EFG_mtEFG_C"/>
    <property type="match status" value="1"/>
</dbReference>
<dbReference type="CDD" id="cd04088">
    <property type="entry name" value="EFG_mtEFG_II"/>
    <property type="match status" value="1"/>
</dbReference>
<dbReference type="FunFam" id="2.40.30.10:FF:000006">
    <property type="entry name" value="Elongation factor G"/>
    <property type="match status" value="1"/>
</dbReference>
<dbReference type="FunFam" id="3.30.230.10:FF:000003">
    <property type="entry name" value="Elongation factor G"/>
    <property type="match status" value="1"/>
</dbReference>
<dbReference type="FunFam" id="3.30.70.240:FF:000001">
    <property type="entry name" value="Elongation factor G"/>
    <property type="match status" value="1"/>
</dbReference>
<dbReference type="FunFam" id="3.30.70.870:FF:000001">
    <property type="entry name" value="Elongation factor G"/>
    <property type="match status" value="1"/>
</dbReference>
<dbReference type="FunFam" id="3.40.50.300:FF:000029">
    <property type="entry name" value="Elongation factor G"/>
    <property type="match status" value="1"/>
</dbReference>
<dbReference type="Gene3D" id="3.30.230.10">
    <property type="match status" value="1"/>
</dbReference>
<dbReference type="Gene3D" id="3.30.70.240">
    <property type="match status" value="1"/>
</dbReference>
<dbReference type="Gene3D" id="3.30.70.870">
    <property type="entry name" value="Elongation Factor G (Translational Gtpase), domain 3"/>
    <property type="match status" value="1"/>
</dbReference>
<dbReference type="Gene3D" id="3.40.50.300">
    <property type="entry name" value="P-loop containing nucleotide triphosphate hydrolases"/>
    <property type="match status" value="1"/>
</dbReference>
<dbReference type="Gene3D" id="2.40.30.10">
    <property type="entry name" value="Translation factors"/>
    <property type="match status" value="1"/>
</dbReference>
<dbReference type="HAMAP" id="MF_00054_B">
    <property type="entry name" value="EF_G_EF_2_B"/>
    <property type="match status" value="1"/>
</dbReference>
<dbReference type="InterPro" id="IPR053905">
    <property type="entry name" value="EF-G-like_DII"/>
</dbReference>
<dbReference type="InterPro" id="IPR041095">
    <property type="entry name" value="EFG_II"/>
</dbReference>
<dbReference type="InterPro" id="IPR009022">
    <property type="entry name" value="EFG_III"/>
</dbReference>
<dbReference type="InterPro" id="IPR035647">
    <property type="entry name" value="EFG_III/V"/>
</dbReference>
<dbReference type="InterPro" id="IPR047872">
    <property type="entry name" value="EFG_IV"/>
</dbReference>
<dbReference type="InterPro" id="IPR035649">
    <property type="entry name" value="EFG_V"/>
</dbReference>
<dbReference type="InterPro" id="IPR000640">
    <property type="entry name" value="EFG_V-like"/>
</dbReference>
<dbReference type="InterPro" id="IPR031157">
    <property type="entry name" value="G_TR_CS"/>
</dbReference>
<dbReference type="InterPro" id="IPR027417">
    <property type="entry name" value="P-loop_NTPase"/>
</dbReference>
<dbReference type="InterPro" id="IPR020568">
    <property type="entry name" value="Ribosomal_Su5_D2-typ_SF"/>
</dbReference>
<dbReference type="InterPro" id="IPR014721">
    <property type="entry name" value="Ribsml_uS5_D2-typ_fold_subgr"/>
</dbReference>
<dbReference type="InterPro" id="IPR005225">
    <property type="entry name" value="Small_GTP-bd"/>
</dbReference>
<dbReference type="InterPro" id="IPR000795">
    <property type="entry name" value="T_Tr_GTP-bd_dom"/>
</dbReference>
<dbReference type="InterPro" id="IPR009000">
    <property type="entry name" value="Transl_B-barrel_sf"/>
</dbReference>
<dbReference type="InterPro" id="IPR004540">
    <property type="entry name" value="Transl_elong_EFG/EF2"/>
</dbReference>
<dbReference type="InterPro" id="IPR005517">
    <property type="entry name" value="Transl_elong_EFG/EF2_IV"/>
</dbReference>
<dbReference type="NCBIfam" id="TIGR00484">
    <property type="entry name" value="EF-G"/>
    <property type="match status" value="1"/>
</dbReference>
<dbReference type="NCBIfam" id="NF009379">
    <property type="entry name" value="PRK12740.1-3"/>
    <property type="match status" value="1"/>
</dbReference>
<dbReference type="NCBIfam" id="NF009381">
    <property type="entry name" value="PRK12740.1-5"/>
    <property type="match status" value="1"/>
</dbReference>
<dbReference type="NCBIfam" id="NF009891">
    <property type="entry name" value="PRK13351.1-1"/>
    <property type="match status" value="1"/>
</dbReference>
<dbReference type="NCBIfam" id="TIGR00231">
    <property type="entry name" value="small_GTP"/>
    <property type="match status" value="1"/>
</dbReference>
<dbReference type="PANTHER" id="PTHR43261:SF1">
    <property type="entry name" value="RIBOSOME-RELEASING FACTOR 2, MITOCHONDRIAL"/>
    <property type="match status" value="1"/>
</dbReference>
<dbReference type="PANTHER" id="PTHR43261">
    <property type="entry name" value="TRANSLATION ELONGATION FACTOR G-RELATED"/>
    <property type="match status" value="1"/>
</dbReference>
<dbReference type="Pfam" id="PF22042">
    <property type="entry name" value="EF-G_D2"/>
    <property type="match status" value="1"/>
</dbReference>
<dbReference type="Pfam" id="PF00679">
    <property type="entry name" value="EFG_C"/>
    <property type="match status" value="1"/>
</dbReference>
<dbReference type="Pfam" id="PF14492">
    <property type="entry name" value="EFG_III"/>
    <property type="match status" value="1"/>
</dbReference>
<dbReference type="Pfam" id="PF03764">
    <property type="entry name" value="EFG_IV"/>
    <property type="match status" value="1"/>
</dbReference>
<dbReference type="Pfam" id="PF00009">
    <property type="entry name" value="GTP_EFTU"/>
    <property type="match status" value="1"/>
</dbReference>
<dbReference type="PRINTS" id="PR00315">
    <property type="entry name" value="ELONGATNFCT"/>
</dbReference>
<dbReference type="SMART" id="SM00838">
    <property type="entry name" value="EFG_C"/>
    <property type="match status" value="1"/>
</dbReference>
<dbReference type="SMART" id="SM00889">
    <property type="entry name" value="EFG_IV"/>
    <property type="match status" value="1"/>
</dbReference>
<dbReference type="SUPFAM" id="SSF54980">
    <property type="entry name" value="EF-G C-terminal domain-like"/>
    <property type="match status" value="2"/>
</dbReference>
<dbReference type="SUPFAM" id="SSF52540">
    <property type="entry name" value="P-loop containing nucleoside triphosphate hydrolases"/>
    <property type="match status" value="1"/>
</dbReference>
<dbReference type="SUPFAM" id="SSF54211">
    <property type="entry name" value="Ribosomal protein S5 domain 2-like"/>
    <property type="match status" value="1"/>
</dbReference>
<dbReference type="SUPFAM" id="SSF50447">
    <property type="entry name" value="Translation proteins"/>
    <property type="match status" value="1"/>
</dbReference>
<dbReference type="PROSITE" id="PS00301">
    <property type="entry name" value="G_TR_1"/>
    <property type="match status" value="1"/>
</dbReference>
<dbReference type="PROSITE" id="PS51722">
    <property type="entry name" value="G_TR_2"/>
    <property type="match status" value="1"/>
</dbReference>
<organism>
    <name type="scientific">Desulforudis audaxviator (strain MP104C)</name>
    <dbReference type="NCBI Taxonomy" id="477974"/>
    <lineage>
        <taxon>Bacteria</taxon>
        <taxon>Bacillati</taxon>
        <taxon>Bacillota</taxon>
        <taxon>Clostridia</taxon>
        <taxon>Thermoanaerobacterales</taxon>
        <taxon>Candidatus Desulforudaceae</taxon>
        <taxon>Candidatus Desulforudis</taxon>
    </lineage>
</organism>
<accession>B1I1I5</accession>
<comment type="function">
    <text evidence="1">Catalyzes the GTP-dependent ribosomal translocation step during translation elongation. During this step, the ribosome changes from the pre-translocational (PRE) to the post-translocational (POST) state as the newly formed A-site-bound peptidyl-tRNA and P-site-bound deacylated tRNA move to the P and E sites, respectively. Catalyzes the coordinated movement of the two tRNA molecules, the mRNA and conformational changes in the ribosome.</text>
</comment>
<comment type="subcellular location">
    <subcellularLocation>
        <location evidence="1">Cytoplasm</location>
    </subcellularLocation>
</comment>
<comment type="similarity">
    <text evidence="1">Belongs to the TRAFAC class translation factor GTPase superfamily. Classic translation factor GTPase family. EF-G/EF-2 subfamily.</text>
</comment>
<reference key="1">
    <citation type="submission" date="2007-10" db="EMBL/GenBank/DDBJ databases">
        <title>Complete sequence of chromosome of Desulforudis audaxviator MP104C.</title>
        <authorList>
            <person name="Copeland A."/>
            <person name="Lucas S."/>
            <person name="Lapidus A."/>
            <person name="Barry K."/>
            <person name="Glavina del Rio T."/>
            <person name="Dalin E."/>
            <person name="Tice H."/>
            <person name="Bruce D."/>
            <person name="Pitluck S."/>
            <person name="Lowry S.R."/>
            <person name="Larimer F."/>
            <person name="Land M.L."/>
            <person name="Hauser L."/>
            <person name="Kyrpides N."/>
            <person name="Ivanova N.N."/>
            <person name="Richardson P."/>
        </authorList>
    </citation>
    <scope>NUCLEOTIDE SEQUENCE [LARGE SCALE GENOMIC DNA]</scope>
    <source>
        <strain>MP104C</strain>
    </source>
</reference>
<protein>
    <recommendedName>
        <fullName evidence="1">Elongation factor G</fullName>
        <shortName evidence="1">EF-G</shortName>
    </recommendedName>
</protein>
<gene>
    <name evidence="1" type="primary">fusA</name>
    <name type="ordered locus">Daud_0222</name>
</gene>
<evidence type="ECO:0000255" key="1">
    <source>
        <dbReference type="HAMAP-Rule" id="MF_00054"/>
    </source>
</evidence>
<name>EFG_DESAP</name>
<feature type="chain" id="PRO_1000091706" description="Elongation factor G">
    <location>
        <begin position="1"/>
        <end position="689"/>
    </location>
</feature>
<feature type="domain" description="tr-type G">
    <location>
        <begin position="8"/>
        <end position="282"/>
    </location>
</feature>
<feature type="binding site" evidence="1">
    <location>
        <begin position="17"/>
        <end position="24"/>
    </location>
    <ligand>
        <name>GTP</name>
        <dbReference type="ChEBI" id="CHEBI:37565"/>
    </ligand>
</feature>
<feature type="binding site" evidence="1">
    <location>
        <begin position="81"/>
        <end position="85"/>
    </location>
    <ligand>
        <name>GTP</name>
        <dbReference type="ChEBI" id="CHEBI:37565"/>
    </ligand>
</feature>
<feature type="binding site" evidence="1">
    <location>
        <begin position="135"/>
        <end position="138"/>
    </location>
    <ligand>
        <name>GTP</name>
        <dbReference type="ChEBI" id="CHEBI:37565"/>
    </ligand>
</feature>
<proteinExistence type="inferred from homology"/>